<comment type="function">
    <text evidence="1">Required for insertion of 4Fe-4S clusters for at least IspG.</text>
</comment>
<comment type="cofactor">
    <cofactor evidence="1">
        <name>iron-sulfur cluster</name>
        <dbReference type="ChEBI" id="CHEBI:30408"/>
    </cofactor>
    <text evidence="1">Binds 1 iron-sulfur cluster per subunit.</text>
</comment>
<comment type="subunit">
    <text evidence="1">Homodimer.</text>
</comment>
<comment type="similarity">
    <text evidence="1">Belongs to the HesB/IscA family.</text>
</comment>
<evidence type="ECO:0000255" key="1">
    <source>
        <dbReference type="HAMAP-Rule" id="MF_01380"/>
    </source>
</evidence>
<sequence length="114" mass="12100">MSDDVALPLEFTDAAANKVKSLIADEDNPNLKLRVYITGGGCSGFQYGFTFDDQVNEGDMTIEKQGVGLVVDPMSLQYLVGGSVDYTEGLEGSRFIVTNPNAKSTCGCGSSFSI</sequence>
<dbReference type="EMBL" id="CU928164">
    <property type="protein sequence ID" value="CAR16300.1"/>
    <property type="molecule type" value="Genomic_DNA"/>
</dbReference>
<dbReference type="RefSeq" id="WP_001295564.1">
    <property type="nucleotide sequence ID" value="NC_011750.1"/>
</dbReference>
<dbReference type="RefSeq" id="YP_002406206.1">
    <property type="nucleotide sequence ID" value="NC_011750.1"/>
</dbReference>
<dbReference type="SMR" id="B7NIB9"/>
<dbReference type="STRING" id="585057.ECIAI39_0160"/>
<dbReference type="GeneID" id="93777270"/>
<dbReference type="KEGG" id="ect:ECIAI39_0160"/>
<dbReference type="PATRIC" id="fig|585057.6.peg.173"/>
<dbReference type="HOGENOM" id="CLU_069054_5_3_6"/>
<dbReference type="Proteomes" id="UP000000749">
    <property type="component" value="Chromosome"/>
</dbReference>
<dbReference type="GO" id="GO:0005829">
    <property type="term" value="C:cytosol"/>
    <property type="evidence" value="ECO:0007669"/>
    <property type="project" value="TreeGrafter"/>
</dbReference>
<dbReference type="GO" id="GO:0051537">
    <property type="term" value="F:2 iron, 2 sulfur cluster binding"/>
    <property type="evidence" value="ECO:0007669"/>
    <property type="project" value="UniProtKB-ARBA"/>
</dbReference>
<dbReference type="GO" id="GO:0051539">
    <property type="term" value="F:4 iron, 4 sulfur cluster binding"/>
    <property type="evidence" value="ECO:0007669"/>
    <property type="project" value="TreeGrafter"/>
</dbReference>
<dbReference type="GO" id="GO:0005506">
    <property type="term" value="F:iron ion binding"/>
    <property type="evidence" value="ECO:0007669"/>
    <property type="project" value="UniProtKB-UniRule"/>
</dbReference>
<dbReference type="GO" id="GO:0016226">
    <property type="term" value="P:iron-sulfur cluster assembly"/>
    <property type="evidence" value="ECO:0007669"/>
    <property type="project" value="UniProtKB-UniRule"/>
</dbReference>
<dbReference type="FunFam" id="2.60.300.12:FF:000002">
    <property type="entry name" value="Iron-sulfur cluster insertion protein ErpA"/>
    <property type="match status" value="1"/>
</dbReference>
<dbReference type="Gene3D" id="2.60.300.12">
    <property type="entry name" value="HesB-like domain"/>
    <property type="match status" value="1"/>
</dbReference>
<dbReference type="HAMAP" id="MF_01380">
    <property type="entry name" value="Fe_S_insert_ErpA"/>
    <property type="match status" value="1"/>
</dbReference>
<dbReference type="InterPro" id="IPR000361">
    <property type="entry name" value="FeS_biogenesis"/>
</dbReference>
<dbReference type="InterPro" id="IPR016092">
    <property type="entry name" value="FeS_cluster_insertion"/>
</dbReference>
<dbReference type="InterPro" id="IPR017870">
    <property type="entry name" value="FeS_cluster_insertion_CS"/>
</dbReference>
<dbReference type="InterPro" id="IPR023063">
    <property type="entry name" value="FeS_cluster_insertion_RrpA"/>
</dbReference>
<dbReference type="InterPro" id="IPR035903">
    <property type="entry name" value="HesB-like_dom_sf"/>
</dbReference>
<dbReference type="NCBIfam" id="TIGR00049">
    <property type="entry name" value="iron-sulfur cluster assembly accessory protein"/>
    <property type="match status" value="1"/>
</dbReference>
<dbReference type="NCBIfam" id="NF010147">
    <property type="entry name" value="PRK13623.1"/>
    <property type="match status" value="1"/>
</dbReference>
<dbReference type="PANTHER" id="PTHR43011">
    <property type="entry name" value="IRON-SULFUR CLUSTER ASSEMBLY 2 HOMOLOG, MITOCHONDRIAL"/>
    <property type="match status" value="1"/>
</dbReference>
<dbReference type="PANTHER" id="PTHR43011:SF1">
    <property type="entry name" value="IRON-SULFUR CLUSTER ASSEMBLY 2 HOMOLOG, MITOCHONDRIAL"/>
    <property type="match status" value="1"/>
</dbReference>
<dbReference type="Pfam" id="PF01521">
    <property type="entry name" value="Fe-S_biosyn"/>
    <property type="match status" value="1"/>
</dbReference>
<dbReference type="SUPFAM" id="SSF89360">
    <property type="entry name" value="HesB-like domain"/>
    <property type="match status" value="1"/>
</dbReference>
<dbReference type="PROSITE" id="PS01152">
    <property type="entry name" value="HESB"/>
    <property type="match status" value="1"/>
</dbReference>
<feature type="chain" id="PRO_1000144909" description="Iron-sulfur cluster insertion protein ErpA">
    <location>
        <begin position="1"/>
        <end position="114"/>
    </location>
</feature>
<feature type="binding site" evidence="1">
    <location>
        <position position="42"/>
    </location>
    <ligand>
        <name>iron-sulfur cluster</name>
        <dbReference type="ChEBI" id="CHEBI:30408"/>
    </ligand>
</feature>
<feature type="binding site" evidence="1">
    <location>
        <position position="106"/>
    </location>
    <ligand>
        <name>iron-sulfur cluster</name>
        <dbReference type="ChEBI" id="CHEBI:30408"/>
    </ligand>
</feature>
<feature type="binding site" evidence="1">
    <location>
        <position position="108"/>
    </location>
    <ligand>
        <name>iron-sulfur cluster</name>
        <dbReference type="ChEBI" id="CHEBI:30408"/>
    </ligand>
</feature>
<organism>
    <name type="scientific">Escherichia coli O7:K1 (strain IAI39 / ExPEC)</name>
    <dbReference type="NCBI Taxonomy" id="585057"/>
    <lineage>
        <taxon>Bacteria</taxon>
        <taxon>Pseudomonadati</taxon>
        <taxon>Pseudomonadota</taxon>
        <taxon>Gammaproteobacteria</taxon>
        <taxon>Enterobacterales</taxon>
        <taxon>Enterobacteriaceae</taxon>
        <taxon>Escherichia</taxon>
    </lineage>
</organism>
<name>ERPA_ECO7I</name>
<reference key="1">
    <citation type="journal article" date="2009" name="PLoS Genet.">
        <title>Organised genome dynamics in the Escherichia coli species results in highly diverse adaptive paths.</title>
        <authorList>
            <person name="Touchon M."/>
            <person name="Hoede C."/>
            <person name="Tenaillon O."/>
            <person name="Barbe V."/>
            <person name="Baeriswyl S."/>
            <person name="Bidet P."/>
            <person name="Bingen E."/>
            <person name="Bonacorsi S."/>
            <person name="Bouchier C."/>
            <person name="Bouvet O."/>
            <person name="Calteau A."/>
            <person name="Chiapello H."/>
            <person name="Clermont O."/>
            <person name="Cruveiller S."/>
            <person name="Danchin A."/>
            <person name="Diard M."/>
            <person name="Dossat C."/>
            <person name="Karoui M.E."/>
            <person name="Frapy E."/>
            <person name="Garry L."/>
            <person name="Ghigo J.M."/>
            <person name="Gilles A.M."/>
            <person name="Johnson J."/>
            <person name="Le Bouguenec C."/>
            <person name="Lescat M."/>
            <person name="Mangenot S."/>
            <person name="Martinez-Jehanne V."/>
            <person name="Matic I."/>
            <person name="Nassif X."/>
            <person name="Oztas S."/>
            <person name="Petit M.A."/>
            <person name="Pichon C."/>
            <person name="Rouy Z."/>
            <person name="Ruf C.S."/>
            <person name="Schneider D."/>
            <person name="Tourret J."/>
            <person name="Vacherie B."/>
            <person name="Vallenet D."/>
            <person name="Medigue C."/>
            <person name="Rocha E.P.C."/>
            <person name="Denamur E."/>
        </authorList>
    </citation>
    <scope>NUCLEOTIDE SEQUENCE [LARGE SCALE GENOMIC DNA]</scope>
    <source>
        <strain>IAI39 / ExPEC</strain>
    </source>
</reference>
<proteinExistence type="inferred from homology"/>
<accession>B7NIB9</accession>
<gene>
    <name evidence="1" type="primary">erpA</name>
    <name type="ordered locus">ECIAI39_0160</name>
</gene>
<keyword id="KW-0408">Iron</keyword>
<keyword id="KW-0411">Iron-sulfur</keyword>
<keyword id="KW-0479">Metal-binding</keyword>
<protein>
    <recommendedName>
        <fullName evidence="1">Iron-sulfur cluster insertion protein ErpA</fullName>
    </recommendedName>
</protein>